<sequence length="359" mass="40600">MNIYDQLQAVEDRYEELGELLSDPDVVSDTKRFMELSREEANTRETVTAYREYKQVIQTISDAEEMIKDASGDPELEEMAKEELKESKAAKEEYEEKLKILLLPKDPNDDKNIILEIRGAAGGDEAALFAGDLLTMYQKYAETQGWRFEVMESSVNGVGGIKEVVAMVSGQSVYSKLKYESGAHRVQRVPVTESQGRVHTSTATVLVMPEVEEVEYDIDQKDLRVDIYHASGAGGQNVNKVATAVRMVHIPTGIKVEMQEERTQQKNRDKAMKIIRARVADHFAQIAQDEQDAERKSTVGTGDRSERIRTYNFPQNRVTDHRIGLTLQKLDTILSGKMDEVIDALVMYDQTKKLESLNN</sequence>
<protein>
    <recommendedName>
        <fullName evidence="1">Peptide chain release factor 1</fullName>
        <shortName evidence="1">RF-1</shortName>
    </recommendedName>
</protein>
<keyword id="KW-0963">Cytoplasm</keyword>
<keyword id="KW-0488">Methylation</keyword>
<keyword id="KW-0648">Protein biosynthesis</keyword>
<gene>
    <name evidence="1" type="primary">prfA</name>
    <name type="ordered locus">MGAS10270_Spy0977</name>
</gene>
<feature type="chain" id="PRO_0000263366" description="Peptide chain release factor 1">
    <location>
        <begin position="1"/>
        <end position="359"/>
    </location>
</feature>
<feature type="modified residue" description="N5-methylglutamine" evidence="1">
    <location>
        <position position="236"/>
    </location>
</feature>
<evidence type="ECO:0000255" key="1">
    <source>
        <dbReference type="HAMAP-Rule" id="MF_00093"/>
    </source>
</evidence>
<reference key="1">
    <citation type="journal article" date="2006" name="Proc. Natl. Acad. Sci. U.S.A.">
        <title>Molecular genetic anatomy of inter- and intraserotype variation in the human bacterial pathogen group A Streptococcus.</title>
        <authorList>
            <person name="Beres S.B."/>
            <person name="Richter E.W."/>
            <person name="Nagiec M.J."/>
            <person name="Sumby P."/>
            <person name="Porcella S.F."/>
            <person name="DeLeo F.R."/>
            <person name="Musser J.M."/>
        </authorList>
    </citation>
    <scope>NUCLEOTIDE SEQUENCE [LARGE SCALE GENOMIC DNA]</scope>
    <source>
        <strain>MGAS10270</strain>
    </source>
</reference>
<accession>Q1JGV2</accession>
<proteinExistence type="inferred from homology"/>
<dbReference type="EMBL" id="CP000260">
    <property type="protein sequence ID" value="ABF34042.1"/>
    <property type="molecule type" value="Genomic_DNA"/>
</dbReference>
<dbReference type="SMR" id="Q1JGV2"/>
<dbReference type="KEGG" id="sph:MGAS10270_Spy0977"/>
<dbReference type="HOGENOM" id="CLU_036856_0_1_9"/>
<dbReference type="Proteomes" id="UP000002436">
    <property type="component" value="Chromosome"/>
</dbReference>
<dbReference type="GO" id="GO:0005737">
    <property type="term" value="C:cytoplasm"/>
    <property type="evidence" value="ECO:0007669"/>
    <property type="project" value="UniProtKB-SubCell"/>
</dbReference>
<dbReference type="GO" id="GO:0016149">
    <property type="term" value="F:translation release factor activity, codon specific"/>
    <property type="evidence" value="ECO:0007669"/>
    <property type="project" value="UniProtKB-UniRule"/>
</dbReference>
<dbReference type="FunFam" id="3.30.160.20:FF:000027">
    <property type="entry name" value="Peptide chain release factor 1"/>
    <property type="match status" value="1"/>
</dbReference>
<dbReference type="FunFam" id="3.30.70.1660:FF:000002">
    <property type="entry name" value="Peptide chain release factor 1"/>
    <property type="match status" value="1"/>
</dbReference>
<dbReference type="FunFam" id="3.30.70.1660:FF:000004">
    <property type="entry name" value="Peptide chain release factor 1"/>
    <property type="match status" value="1"/>
</dbReference>
<dbReference type="Gene3D" id="3.30.160.20">
    <property type="match status" value="1"/>
</dbReference>
<dbReference type="Gene3D" id="3.30.70.1660">
    <property type="match status" value="2"/>
</dbReference>
<dbReference type="Gene3D" id="6.10.140.1950">
    <property type="match status" value="1"/>
</dbReference>
<dbReference type="HAMAP" id="MF_00093">
    <property type="entry name" value="Rel_fac_1"/>
    <property type="match status" value="1"/>
</dbReference>
<dbReference type="InterPro" id="IPR005139">
    <property type="entry name" value="PCRF"/>
</dbReference>
<dbReference type="InterPro" id="IPR000352">
    <property type="entry name" value="Pep_chain_release_fac_I"/>
</dbReference>
<dbReference type="InterPro" id="IPR045853">
    <property type="entry name" value="Pep_chain_release_fac_I_sf"/>
</dbReference>
<dbReference type="InterPro" id="IPR050057">
    <property type="entry name" value="Prokaryotic/Mito_RF"/>
</dbReference>
<dbReference type="InterPro" id="IPR004373">
    <property type="entry name" value="RF-1"/>
</dbReference>
<dbReference type="NCBIfam" id="TIGR00019">
    <property type="entry name" value="prfA"/>
    <property type="match status" value="1"/>
</dbReference>
<dbReference type="NCBIfam" id="NF001859">
    <property type="entry name" value="PRK00591.1"/>
    <property type="match status" value="1"/>
</dbReference>
<dbReference type="PANTHER" id="PTHR43804">
    <property type="entry name" value="LD18447P"/>
    <property type="match status" value="1"/>
</dbReference>
<dbReference type="PANTHER" id="PTHR43804:SF7">
    <property type="entry name" value="LD18447P"/>
    <property type="match status" value="1"/>
</dbReference>
<dbReference type="Pfam" id="PF03462">
    <property type="entry name" value="PCRF"/>
    <property type="match status" value="1"/>
</dbReference>
<dbReference type="Pfam" id="PF00472">
    <property type="entry name" value="RF-1"/>
    <property type="match status" value="1"/>
</dbReference>
<dbReference type="SMART" id="SM00937">
    <property type="entry name" value="PCRF"/>
    <property type="match status" value="1"/>
</dbReference>
<dbReference type="SUPFAM" id="SSF75620">
    <property type="entry name" value="Release factor"/>
    <property type="match status" value="1"/>
</dbReference>
<dbReference type="PROSITE" id="PS00745">
    <property type="entry name" value="RF_PROK_I"/>
    <property type="match status" value="1"/>
</dbReference>
<name>RF1_STRPD</name>
<organism>
    <name type="scientific">Streptococcus pyogenes serotype M2 (strain MGAS10270)</name>
    <dbReference type="NCBI Taxonomy" id="370552"/>
    <lineage>
        <taxon>Bacteria</taxon>
        <taxon>Bacillati</taxon>
        <taxon>Bacillota</taxon>
        <taxon>Bacilli</taxon>
        <taxon>Lactobacillales</taxon>
        <taxon>Streptococcaceae</taxon>
        <taxon>Streptococcus</taxon>
    </lineage>
</organism>
<comment type="function">
    <text evidence="1">Peptide chain release factor 1 directs the termination of translation in response to the peptide chain termination codons UAG and UAA.</text>
</comment>
<comment type="subcellular location">
    <subcellularLocation>
        <location evidence="1">Cytoplasm</location>
    </subcellularLocation>
</comment>
<comment type="PTM">
    <text evidence="1">Methylated by PrmC. Methylation increases the termination efficiency of RF1.</text>
</comment>
<comment type="similarity">
    <text evidence="1">Belongs to the prokaryotic/mitochondrial release factor family.</text>
</comment>